<proteinExistence type="inferred from homology"/>
<comment type="function">
    <text evidence="1">Binds together with bS18 to 16S ribosomal RNA.</text>
</comment>
<comment type="similarity">
    <text evidence="1">Belongs to the bacterial ribosomal protein bS6 family.</text>
</comment>
<dbReference type="EMBL" id="CP000444">
    <property type="protein sequence ID" value="ABI41689.1"/>
    <property type="molecule type" value="Genomic_DNA"/>
</dbReference>
<dbReference type="SMR" id="Q0HYW6"/>
<dbReference type="KEGG" id="shm:Shewmr7_0687"/>
<dbReference type="HOGENOM" id="CLU_113441_6_1_6"/>
<dbReference type="GO" id="GO:0022627">
    <property type="term" value="C:cytosolic small ribosomal subunit"/>
    <property type="evidence" value="ECO:0007669"/>
    <property type="project" value="TreeGrafter"/>
</dbReference>
<dbReference type="GO" id="GO:0070181">
    <property type="term" value="F:small ribosomal subunit rRNA binding"/>
    <property type="evidence" value="ECO:0007669"/>
    <property type="project" value="TreeGrafter"/>
</dbReference>
<dbReference type="GO" id="GO:0003735">
    <property type="term" value="F:structural constituent of ribosome"/>
    <property type="evidence" value="ECO:0007669"/>
    <property type="project" value="InterPro"/>
</dbReference>
<dbReference type="GO" id="GO:0006412">
    <property type="term" value="P:translation"/>
    <property type="evidence" value="ECO:0007669"/>
    <property type="project" value="UniProtKB-UniRule"/>
</dbReference>
<dbReference type="CDD" id="cd00473">
    <property type="entry name" value="bS6"/>
    <property type="match status" value="1"/>
</dbReference>
<dbReference type="FunFam" id="3.30.70.60:FF:000003">
    <property type="entry name" value="30S ribosomal protein S6"/>
    <property type="match status" value="1"/>
</dbReference>
<dbReference type="Gene3D" id="3.30.70.60">
    <property type="match status" value="1"/>
</dbReference>
<dbReference type="HAMAP" id="MF_00360">
    <property type="entry name" value="Ribosomal_bS6"/>
    <property type="match status" value="1"/>
</dbReference>
<dbReference type="InterPro" id="IPR000529">
    <property type="entry name" value="Ribosomal_bS6"/>
</dbReference>
<dbReference type="InterPro" id="IPR035980">
    <property type="entry name" value="Ribosomal_bS6_sf"/>
</dbReference>
<dbReference type="InterPro" id="IPR020814">
    <property type="entry name" value="Ribosomal_S6_plastid/chlpt"/>
</dbReference>
<dbReference type="InterPro" id="IPR014717">
    <property type="entry name" value="Transl_elong_EF1B/ribsomal_bS6"/>
</dbReference>
<dbReference type="NCBIfam" id="TIGR00166">
    <property type="entry name" value="S6"/>
    <property type="match status" value="1"/>
</dbReference>
<dbReference type="PANTHER" id="PTHR21011">
    <property type="entry name" value="MITOCHONDRIAL 28S RIBOSOMAL PROTEIN S6"/>
    <property type="match status" value="1"/>
</dbReference>
<dbReference type="PANTHER" id="PTHR21011:SF1">
    <property type="entry name" value="SMALL RIBOSOMAL SUBUNIT PROTEIN BS6M"/>
    <property type="match status" value="1"/>
</dbReference>
<dbReference type="Pfam" id="PF01250">
    <property type="entry name" value="Ribosomal_S6"/>
    <property type="match status" value="1"/>
</dbReference>
<dbReference type="SUPFAM" id="SSF54995">
    <property type="entry name" value="Ribosomal protein S6"/>
    <property type="match status" value="1"/>
</dbReference>
<keyword id="KW-0687">Ribonucleoprotein</keyword>
<keyword id="KW-0689">Ribosomal protein</keyword>
<keyword id="KW-0694">RNA-binding</keyword>
<keyword id="KW-0699">rRNA-binding</keyword>
<reference key="1">
    <citation type="submission" date="2006-08" db="EMBL/GenBank/DDBJ databases">
        <title>Complete sequence of chromosome 1 of Shewanella sp. MR-7.</title>
        <authorList>
            <person name="Copeland A."/>
            <person name="Lucas S."/>
            <person name="Lapidus A."/>
            <person name="Barry K."/>
            <person name="Detter J.C."/>
            <person name="Glavina del Rio T."/>
            <person name="Hammon N."/>
            <person name="Israni S."/>
            <person name="Dalin E."/>
            <person name="Tice H."/>
            <person name="Pitluck S."/>
            <person name="Kiss H."/>
            <person name="Brettin T."/>
            <person name="Bruce D."/>
            <person name="Han C."/>
            <person name="Tapia R."/>
            <person name="Gilna P."/>
            <person name="Schmutz J."/>
            <person name="Larimer F."/>
            <person name="Land M."/>
            <person name="Hauser L."/>
            <person name="Kyrpides N."/>
            <person name="Mikhailova N."/>
            <person name="Nealson K."/>
            <person name="Konstantinidis K."/>
            <person name="Klappenbach J."/>
            <person name="Tiedje J."/>
            <person name="Richardson P."/>
        </authorList>
    </citation>
    <scope>NUCLEOTIDE SEQUENCE [LARGE SCALE GENOMIC DNA]</scope>
    <source>
        <strain>MR-7</strain>
    </source>
</reference>
<sequence>MRHYEIVFMVHPDQSEQVPGMIERYTGVITEANGKIHRLEDWGRRQLAYPIQDLHKAHYVLMNVEAPAETIEELETAFRFNDAVLRNMVMRTKVAVTEASPMAKAKDERDSRRGPAGDRSYDEANAEEIAE</sequence>
<accession>Q0HYW6</accession>
<name>RS6_SHESR</name>
<organism>
    <name type="scientific">Shewanella sp. (strain MR-7)</name>
    <dbReference type="NCBI Taxonomy" id="60481"/>
    <lineage>
        <taxon>Bacteria</taxon>
        <taxon>Pseudomonadati</taxon>
        <taxon>Pseudomonadota</taxon>
        <taxon>Gammaproteobacteria</taxon>
        <taxon>Alteromonadales</taxon>
        <taxon>Shewanellaceae</taxon>
        <taxon>Shewanella</taxon>
    </lineage>
</organism>
<gene>
    <name evidence="1" type="primary">rpsF</name>
    <name type="ordered locus">Shewmr7_0687</name>
</gene>
<protein>
    <recommendedName>
        <fullName evidence="1">Small ribosomal subunit protein bS6</fullName>
    </recommendedName>
    <alternativeName>
        <fullName evidence="3">30S ribosomal protein S6</fullName>
    </alternativeName>
</protein>
<feature type="chain" id="PRO_1000005352" description="Small ribosomal subunit protein bS6">
    <location>
        <begin position="1"/>
        <end position="131"/>
    </location>
</feature>
<feature type="region of interest" description="Disordered" evidence="2">
    <location>
        <begin position="96"/>
        <end position="131"/>
    </location>
</feature>
<feature type="compositionally biased region" description="Basic and acidic residues" evidence="2">
    <location>
        <begin position="104"/>
        <end position="122"/>
    </location>
</feature>
<evidence type="ECO:0000255" key="1">
    <source>
        <dbReference type="HAMAP-Rule" id="MF_00360"/>
    </source>
</evidence>
<evidence type="ECO:0000256" key="2">
    <source>
        <dbReference type="SAM" id="MobiDB-lite"/>
    </source>
</evidence>
<evidence type="ECO:0000305" key="3"/>